<accession>A4II20</accession>
<accession>Q6F2L9</accession>
<proteinExistence type="evidence at transcript level"/>
<protein>
    <recommendedName>
        <fullName evidence="1">Early growth response protein 1</fullName>
        <shortName evidence="1">EGR-1</shortName>
    </recommendedName>
</protein>
<reference evidence="9" key="1">
    <citation type="submission" date="2004-07" db="EMBL/GenBank/DDBJ databases">
        <title>Sequence of Xenopus tropicalis development genes.</title>
        <authorList>
            <person name="Qin S."/>
            <person name="Dors M."/>
            <person name="Johnson E."/>
            <person name="Bloom S."/>
            <person name="Hood L."/>
            <person name="Rowen L."/>
        </authorList>
    </citation>
    <scope>NUCLEOTIDE SEQUENCE [GENOMIC DNA]</scope>
</reference>
<reference evidence="9" key="2">
    <citation type="submission" date="2007-03" db="EMBL/GenBank/DDBJ databases">
        <authorList>
            <consortium name="NIH - Xenopus Gene Collection (XGC) project"/>
        </authorList>
    </citation>
    <scope>NUCLEOTIDE SEQUENCE [LARGE SCALE MRNA]</scope>
    <source>
        <tissue evidence="8">Tadpole</tissue>
    </source>
</reference>
<comment type="function">
    <text evidence="1 2">Transcriptional regulator. Recognizes and binds to the DNA sequence 5'-GCG(T/G)GGGCG-3'(EGR-site) in the promoter region of target genes (By similarity). Binds double-stranded target DNA, irrespective of the cytosine methylation status (By similarity). Regulates the transcription of numerous target genes, and thereby plays an important role in regulating the response to growth factors, DNA damage, and ischemia. Plays a role in the regulation of cell survival, proliferation and cell death. Mediates responses to ischemia and hypoxia; regulates the expression of proteins that are involved in inflammatory processes (By similarity). Plays a role in regulating the expression of circadian clock genes (By similarity).</text>
</comment>
<comment type="subcellular location">
    <subcellularLocation>
        <location evidence="2">Nucleus</location>
    </subcellularLocation>
    <subcellularLocation>
        <location evidence="2">Cytoplasm</location>
    </subcellularLocation>
</comment>
<comment type="domain">
    <text evidence="2">Binds to DNA motifs with the sequence 5'-GCG(T/G)GGGCG-3' via its C2H2-type zinc fingers. The first, most N-terminal zinc finger binds to the 3'-GCG motif, the middle zinc finger interacts with the central TGG motif, and the C-terminal zinc finger binds to the 5'-GCG motif. Binds double-stranded target DNA, irrespective of the cytosine methylation status. Has reduced affinity for target DNA where the cytosines have been oxidized to 5-hydroxymethylcytosine. Does not bind target DNA where the cytosines have been oxidized to 5-formylcytosine or 5-carboxylcytosine.</text>
</comment>
<comment type="similarity">
    <text evidence="3">Belongs to the EGR C2H2-type zinc-finger protein family.</text>
</comment>
<organism>
    <name type="scientific">Xenopus tropicalis</name>
    <name type="common">Western clawed frog</name>
    <name type="synonym">Silurana tropicalis</name>
    <dbReference type="NCBI Taxonomy" id="8364"/>
    <lineage>
        <taxon>Eukaryota</taxon>
        <taxon>Metazoa</taxon>
        <taxon>Chordata</taxon>
        <taxon>Craniata</taxon>
        <taxon>Vertebrata</taxon>
        <taxon>Euteleostomi</taxon>
        <taxon>Amphibia</taxon>
        <taxon>Batrachia</taxon>
        <taxon>Anura</taxon>
        <taxon>Pipoidea</taxon>
        <taxon>Pipidae</taxon>
        <taxon>Xenopodinae</taxon>
        <taxon>Xenopus</taxon>
        <taxon>Silurana</taxon>
    </lineage>
</organism>
<name>EGR1_XENTR</name>
<evidence type="ECO:0000250" key="1">
    <source>
        <dbReference type="UniProtKB" id="P08046"/>
    </source>
</evidence>
<evidence type="ECO:0000250" key="2">
    <source>
        <dbReference type="UniProtKB" id="P18146"/>
    </source>
</evidence>
<evidence type="ECO:0000255" key="3"/>
<evidence type="ECO:0000255" key="4">
    <source>
        <dbReference type="PROSITE-ProRule" id="PRU00042"/>
    </source>
</evidence>
<evidence type="ECO:0000256" key="5">
    <source>
        <dbReference type="SAM" id="MobiDB-lite"/>
    </source>
</evidence>
<evidence type="ECO:0000303" key="6">
    <source ref="1"/>
</evidence>
<evidence type="ECO:0000305" key="7"/>
<evidence type="ECO:0000312" key="8">
    <source>
        <dbReference type="EMBL" id="AAI35807.1"/>
    </source>
</evidence>
<evidence type="ECO:0000312" key="9">
    <source>
        <dbReference type="EMBL" id="AAT71995.1"/>
    </source>
</evidence>
<sequence>MAAAKTDMLVSPLQISDPFSSFPHSPTMDNYPKLEEMMLLNPGAPQFLGAAVPEGSGFNSPVEGSEQFDHLAADAFSDMSLSGEKAVIESSYANQSARLPSLTYTGRFSLEPAPNSSNTLWPEPLFSLVSGLVGMANASPSSAPSSSPSSSSSSSQSPPLSCSVQSNDSSPIYSAAPTFPNSSPELFPDQSPQPFQNASTASIPYPPPAYPVSKTTFQVPMIPDYLFPQQQGDVSLVSADQKPFQAMESRTQQPSLTPLSTIKAFATQTSQDLKTINSTYQSQIIKPSRMRKYPNRPSKTPPHERPYACPVESCDRRFSRSDELTRHIRIHTGQKPFQCRICMRNFSRSDHLTTHIRTHTGEKPFACDICGRKFARSDERKRHTKIHLRQKDKKADKATPVSVASPVSSYSPSASTSYPSPVPTSYSSPVSSAYPSPVHSSFPSPTTAVTYPSVTSTFQTHGITSFPSSIVTNSFSSPVSSALSDMSITYSPRTIEIC</sequence>
<gene>
    <name evidence="8" type="primary">egr1</name>
    <name evidence="6" type="synonym">egr</name>
</gene>
<feature type="chain" id="PRO_0000386429" description="Early growth response protein 1">
    <location>
        <begin position="1"/>
        <end position="498"/>
    </location>
</feature>
<feature type="zinc finger region" description="C2H2-type 1" evidence="4">
    <location>
        <begin position="307"/>
        <end position="331"/>
    </location>
</feature>
<feature type="zinc finger region" description="C2H2-type 2" evidence="4">
    <location>
        <begin position="337"/>
        <end position="359"/>
    </location>
</feature>
<feature type="zinc finger region" description="C2H2-type 3" evidence="4">
    <location>
        <begin position="365"/>
        <end position="387"/>
    </location>
</feature>
<feature type="region of interest" description="Disordered" evidence="5">
    <location>
        <begin position="137"/>
        <end position="203"/>
    </location>
</feature>
<feature type="region of interest" description="Disordered" evidence="5">
    <location>
        <begin position="287"/>
        <end position="308"/>
    </location>
</feature>
<feature type="region of interest" description="Disordered" evidence="5">
    <location>
        <begin position="378"/>
        <end position="422"/>
    </location>
</feature>
<feature type="compositionally biased region" description="Low complexity" evidence="5">
    <location>
        <begin position="139"/>
        <end position="163"/>
    </location>
</feature>
<feature type="compositionally biased region" description="Polar residues" evidence="5">
    <location>
        <begin position="179"/>
        <end position="202"/>
    </location>
</feature>
<feature type="compositionally biased region" description="Basic residues" evidence="5">
    <location>
        <begin position="382"/>
        <end position="392"/>
    </location>
</feature>
<feature type="compositionally biased region" description="Low complexity" evidence="5">
    <location>
        <begin position="398"/>
        <end position="422"/>
    </location>
</feature>
<feature type="site" description="Interaction with DNA" evidence="2">
    <location>
        <position position="305"/>
    </location>
</feature>
<feature type="site" description="Interaction with DNA" evidence="1">
    <location>
        <position position="316"/>
    </location>
</feature>
<feature type="site" description="Interaction with DNA" evidence="1">
    <location>
        <position position="320"/>
    </location>
</feature>
<feature type="site" description="Interaction with DNA" evidence="2">
    <location>
        <position position="326"/>
    </location>
</feature>
<feature type="site" description="Interaction with DNA" evidence="1">
    <location>
        <position position="344"/>
    </location>
</feature>
<feature type="site" description="Interaction with DNA" evidence="2">
    <location>
        <position position="348"/>
    </location>
</feature>
<feature type="site" description="Interaction with DNA" evidence="2">
    <location>
        <position position="372"/>
    </location>
</feature>
<feature type="site" description="Interaction with DNA" evidence="2">
    <location>
        <position position="376"/>
    </location>
</feature>
<feature type="site" description="Interaction with DNA" evidence="2">
    <location>
        <position position="382"/>
    </location>
</feature>
<feature type="sequence conflict" description="In Ref. 2; AAI35807." evidence="7" ref="2">
    <original>P</original>
    <variation>PS</variation>
    <location>
        <position position="148"/>
    </location>
</feature>
<dbReference type="EMBL" id="AC146894">
    <property type="protein sequence ID" value="AAT71995.1"/>
    <property type="molecule type" value="Genomic_DNA"/>
</dbReference>
<dbReference type="EMBL" id="BC135806">
    <property type="protein sequence ID" value="AAI35807.1"/>
    <property type="molecule type" value="mRNA"/>
</dbReference>
<dbReference type="RefSeq" id="NP_001090830.1">
    <property type="nucleotide sequence ID" value="NM_001097361.1"/>
</dbReference>
<dbReference type="BMRB" id="A4II20"/>
<dbReference type="SMR" id="A4II20"/>
<dbReference type="FunCoup" id="A4II20">
    <property type="interactions" value="4446"/>
</dbReference>
<dbReference type="STRING" id="8364.ENSXETP00000049286"/>
<dbReference type="PaxDb" id="8364-ENSXETP00000047681"/>
<dbReference type="DNASU" id="100038164"/>
<dbReference type="GeneID" id="100038164"/>
<dbReference type="KEGG" id="xtr:100038164"/>
<dbReference type="AGR" id="Xenbase:XB-GENE-853412"/>
<dbReference type="CTD" id="1958"/>
<dbReference type="Xenbase" id="XB-GENE-853412">
    <property type="gene designation" value="egr1"/>
</dbReference>
<dbReference type="eggNOG" id="KOG1721">
    <property type="taxonomic scope" value="Eukaryota"/>
</dbReference>
<dbReference type="InParanoid" id="A4II20"/>
<dbReference type="OrthoDB" id="10018191at2759"/>
<dbReference type="TreeFam" id="TF318980"/>
<dbReference type="Proteomes" id="UP000008143">
    <property type="component" value="Chromosome 3"/>
</dbReference>
<dbReference type="Bgee" id="ENSXETG00000006697">
    <property type="expression patterns" value="Expressed in brain and 19 other cell types or tissues"/>
</dbReference>
<dbReference type="GO" id="GO:0005737">
    <property type="term" value="C:cytoplasm"/>
    <property type="evidence" value="ECO:0000250"/>
    <property type="project" value="UniProtKB"/>
</dbReference>
<dbReference type="GO" id="GO:0005634">
    <property type="term" value="C:nucleus"/>
    <property type="evidence" value="ECO:0000250"/>
    <property type="project" value="UniProtKB"/>
</dbReference>
<dbReference type="GO" id="GO:0003700">
    <property type="term" value="F:DNA-binding transcription factor activity"/>
    <property type="evidence" value="ECO:0000250"/>
    <property type="project" value="UniProtKB"/>
</dbReference>
<dbReference type="GO" id="GO:0010385">
    <property type="term" value="F:double-stranded methylated DNA binding"/>
    <property type="evidence" value="ECO:0000250"/>
    <property type="project" value="UniProtKB"/>
</dbReference>
<dbReference type="GO" id="GO:0044729">
    <property type="term" value="F:hemi-methylated DNA-binding"/>
    <property type="evidence" value="ECO:0000250"/>
    <property type="project" value="UniProtKB"/>
</dbReference>
<dbReference type="GO" id="GO:1990841">
    <property type="term" value="F:promoter-specific chromatin binding"/>
    <property type="evidence" value="ECO:0000250"/>
    <property type="project" value="UniProtKB"/>
</dbReference>
<dbReference type="GO" id="GO:0043565">
    <property type="term" value="F:sequence-specific DNA binding"/>
    <property type="evidence" value="ECO:0000250"/>
    <property type="project" value="UniProtKB"/>
</dbReference>
<dbReference type="GO" id="GO:0008270">
    <property type="term" value="F:zinc ion binding"/>
    <property type="evidence" value="ECO:0000250"/>
    <property type="project" value="UniProtKB"/>
</dbReference>
<dbReference type="GO" id="GO:0032922">
    <property type="term" value="P:circadian regulation of gene expression"/>
    <property type="evidence" value="ECO:0000250"/>
    <property type="project" value="UniProtKB"/>
</dbReference>
<dbReference type="GO" id="GO:0045893">
    <property type="term" value="P:positive regulation of DNA-templated transcription"/>
    <property type="evidence" value="ECO:0000250"/>
    <property type="project" value="UniProtKB"/>
</dbReference>
<dbReference type="GO" id="GO:0045944">
    <property type="term" value="P:positive regulation of transcription by RNA polymerase II"/>
    <property type="evidence" value="ECO:0000250"/>
    <property type="project" value="UniProtKB"/>
</dbReference>
<dbReference type="GO" id="GO:0006355">
    <property type="term" value="P:regulation of DNA-templated transcription"/>
    <property type="evidence" value="ECO:0000250"/>
    <property type="project" value="UniProtKB"/>
</dbReference>
<dbReference type="FunFam" id="3.30.160.60:FF:000769">
    <property type="entry name" value="Early growth response 2b"/>
    <property type="match status" value="1"/>
</dbReference>
<dbReference type="FunFam" id="3.30.160.60:FF:000324">
    <property type="entry name" value="Early growth response protein 4"/>
    <property type="match status" value="1"/>
</dbReference>
<dbReference type="FunFam" id="3.30.160.60:FF:000419">
    <property type="entry name" value="Early growth response protein 4"/>
    <property type="match status" value="1"/>
</dbReference>
<dbReference type="Gene3D" id="3.30.160.60">
    <property type="entry name" value="Classic Zinc Finger"/>
    <property type="match status" value="3"/>
</dbReference>
<dbReference type="InterPro" id="IPR021839">
    <property type="entry name" value="EGR1_C"/>
</dbReference>
<dbReference type="InterPro" id="IPR021849">
    <property type="entry name" value="EGR_N"/>
</dbReference>
<dbReference type="InterPro" id="IPR036236">
    <property type="entry name" value="Znf_C2H2_sf"/>
</dbReference>
<dbReference type="InterPro" id="IPR013087">
    <property type="entry name" value="Znf_C2H2_type"/>
</dbReference>
<dbReference type="PANTHER" id="PTHR23235:SF42">
    <property type="entry name" value="EARLY GROWTH RESPONSE PROTEIN 1"/>
    <property type="match status" value="1"/>
</dbReference>
<dbReference type="PANTHER" id="PTHR23235">
    <property type="entry name" value="KRUEPPEL-LIKE TRANSCRIPTION FACTOR"/>
    <property type="match status" value="1"/>
</dbReference>
<dbReference type="Pfam" id="PF11914">
    <property type="entry name" value="DUF3432"/>
    <property type="match status" value="1"/>
</dbReference>
<dbReference type="Pfam" id="PF11928">
    <property type="entry name" value="DUF3446"/>
    <property type="match status" value="1"/>
</dbReference>
<dbReference type="Pfam" id="PF00096">
    <property type="entry name" value="zf-C2H2"/>
    <property type="match status" value="3"/>
</dbReference>
<dbReference type="SMART" id="SM00355">
    <property type="entry name" value="ZnF_C2H2"/>
    <property type="match status" value="3"/>
</dbReference>
<dbReference type="SUPFAM" id="SSF57667">
    <property type="entry name" value="beta-beta-alpha zinc fingers"/>
    <property type="match status" value="2"/>
</dbReference>
<dbReference type="PROSITE" id="PS00028">
    <property type="entry name" value="ZINC_FINGER_C2H2_1"/>
    <property type="match status" value="3"/>
</dbReference>
<dbReference type="PROSITE" id="PS50157">
    <property type="entry name" value="ZINC_FINGER_C2H2_2"/>
    <property type="match status" value="3"/>
</dbReference>
<keyword id="KW-0010">Activator</keyword>
<keyword id="KW-0090">Biological rhythms</keyword>
<keyword id="KW-0963">Cytoplasm</keyword>
<keyword id="KW-0238">DNA-binding</keyword>
<keyword id="KW-0479">Metal-binding</keyword>
<keyword id="KW-0539">Nucleus</keyword>
<keyword id="KW-1185">Reference proteome</keyword>
<keyword id="KW-0677">Repeat</keyword>
<keyword id="KW-0804">Transcription</keyword>
<keyword id="KW-0805">Transcription regulation</keyword>
<keyword id="KW-0862">Zinc</keyword>
<keyword id="KW-0863">Zinc-finger</keyword>